<evidence type="ECO:0000250" key="1"/>
<evidence type="ECO:0000250" key="2">
    <source>
        <dbReference type="UniProtKB" id="Q16602"/>
    </source>
</evidence>
<evidence type="ECO:0000250" key="3">
    <source>
        <dbReference type="UniProtKB" id="Q9R1W5"/>
    </source>
</evidence>
<evidence type="ECO:0000255" key="4"/>
<evidence type="ECO:0000305" key="5"/>
<proteinExistence type="evidence at transcript level"/>
<protein>
    <recommendedName>
        <fullName>Calcitonin gene-related peptide type 1 receptor</fullName>
        <shortName>CGRP type 1 receptor</shortName>
    </recommendedName>
    <alternativeName>
        <fullName>Calcitonin receptor-like receptor</fullName>
    </alternativeName>
</protein>
<accession>A6QP74</accession>
<name>CALRL_BOVIN</name>
<dbReference type="EMBL" id="BC149184">
    <property type="protein sequence ID" value="AAI49185.1"/>
    <property type="status" value="ALT_INIT"/>
    <property type="molecule type" value="mRNA"/>
</dbReference>
<dbReference type="RefSeq" id="NP_001095577.1">
    <property type="nucleotide sequence ID" value="NM_001102107.1"/>
</dbReference>
<dbReference type="SMR" id="A6QP74"/>
<dbReference type="FunCoup" id="A6QP74">
    <property type="interactions" value="765"/>
</dbReference>
<dbReference type="STRING" id="9913.ENSBTAP00000011169"/>
<dbReference type="GlyCosmos" id="A6QP74">
    <property type="glycosylation" value="3 sites, No reported glycans"/>
</dbReference>
<dbReference type="GlyGen" id="A6QP74">
    <property type="glycosylation" value="3 sites"/>
</dbReference>
<dbReference type="PaxDb" id="9913-ENSBTAP00000056622"/>
<dbReference type="GeneID" id="527140"/>
<dbReference type="KEGG" id="bta:527140"/>
<dbReference type="CTD" id="10203"/>
<dbReference type="eggNOG" id="KOG4564">
    <property type="taxonomic scope" value="Eukaryota"/>
</dbReference>
<dbReference type="InParanoid" id="A6QP74"/>
<dbReference type="OMA" id="LHMNLFS"/>
<dbReference type="OrthoDB" id="16753at2759"/>
<dbReference type="Proteomes" id="UP000009136">
    <property type="component" value="Unplaced"/>
</dbReference>
<dbReference type="GO" id="GO:0005886">
    <property type="term" value="C:plasma membrane"/>
    <property type="evidence" value="ECO:0000314"/>
    <property type="project" value="UniProtKB"/>
</dbReference>
<dbReference type="GO" id="GO:0043235">
    <property type="term" value="C:receptor complex"/>
    <property type="evidence" value="ECO:0000314"/>
    <property type="project" value="UniProtKB"/>
</dbReference>
<dbReference type="GO" id="GO:0001605">
    <property type="term" value="F:adrenomedullin receptor activity"/>
    <property type="evidence" value="ECO:0000318"/>
    <property type="project" value="GO_Central"/>
</dbReference>
<dbReference type="GO" id="GO:0001635">
    <property type="term" value="F:calcitonin gene-related peptide receptor activity"/>
    <property type="evidence" value="ECO:0000318"/>
    <property type="project" value="GO_Central"/>
</dbReference>
<dbReference type="GO" id="GO:0004948">
    <property type="term" value="F:calcitonin receptor activity"/>
    <property type="evidence" value="ECO:0007669"/>
    <property type="project" value="InterPro"/>
</dbReference>
<dbReference type="GO" id="GO:0007189">
    <property type="term" value="P:adenylate cyclase-activating G protein-coupled receptor signaling pathway"/>
    <property type="evidence" value="ECO:0000318"/>
    <property type="project" value="GO_Central"/>
</dbReference>
<dbReference type="GO" id="GO:0001525">
    <property type="term" value="P:angiogenesis"/>
    <property type="evidence" value="ECO:0000318"/>
    <property type="project" value="GO_Central"/>
</dbReference>
<dbReference type="GO" id="GO:0007166">
    <property type="term" value="P:cell surface receptor signaling pathway"/>
    <property type="evidence" value="ECO:0007669"/>
    <property type="project" value="InterPro"/>
</dbReference>
<dbReference type="GO" id="GO:0031623">
    <property type="term" value="P:receptor internalization"/>
    <property type="evidence" value="ECO:0000314"/>
    <property type="project" value="UniProtKB"/>
</dbReference>
<dbReference type="CDD" id="cd15274">
    <property type="entry name" value="7tmB1_calcitonin_R"/>
    <property type="match status" value="1"/>
</dbReference>
<dbReference type="FunFam" id="1.20.1070.10:FF:000079">
    <property type="entry name" value="Calcitonin gene-related peptide type 1 receptor"/>
    <property type="match status" value="1"/>
</dbReference>
<dbReference type="FunFam" id="4.10.1240.10:FF:000011">
    <property type="entry name" value="Calcitonin gene-related peptide type 1 receptor"/>
    <property type="match status" value="1"/>
</dbReference>
<dbReference type="Gene3D" id="4.10.1240.10">
    <property type="entry name" value="GPCR, family 2, extracellular hormone receptor domain"/>
    <property type="match status" value="1"/>
</dbReference>
<dbReference type="Gene3D" id="1.20.1070.10">
    <property type="entry name" value="Rhodopsin 7-helix transmembrane proteins"/>
    <property type="match status" value="1"/>
</dbReference>
<dbReference type="InterPro" id="IPR050332">
    <property type="entry name" value="GPCR_2"/>
</dbReference>
<dbReference type="InterPro" id="IPR017981">
    <property type="entry name" value="GPCR_2-like_7TM"/>
</dbReference>
<dbReference type="InterPro" id="IPR003287">
    <property type="entry name" value="GPCR_2_calcitonin_rcpt_fam"/>
</dbReference>
<dbReference type="InterPro" id="IPR003289">
    <property type="entry name" value="GPCR_2_CGRP1_rcpt"/>
</dbReference>
<dbReference type="InterPro" id="IPR036445">
    <property type="entry name" value="GPCR_2_extracell_dom_sf"/>
</dbReference>
<dbReference type="InterPro" id="IPR001879">
    <property type="entry name" value="GPCR_2_extracellular_dom"/>
</dbReference>
<dbReference type="InterPro" id="IPR000832">
    <property type="entry name" value="GPCR_2_secretin-like"/>
</dbReference>
<dbReference type="InterPro" id="IPR017983">
    <property type="entry name" value="GPCR_2_secretin-like_CS"/>
</dbReference>
<dbReference type="PANTHER" id="PTHR45620:SF21">
    <property type="entry name" value="CALCITONIN GENE-RELATED PEPTIDE TYPE 1 RECEPTOR"/>
    <property type="match status" value="1"/>
</dbReference>
<dbReference type="PANTHER" id="PTHR45620">
    <property type="entry name" value="PDF RECEPTOR-LIKE PROTEIN-RELATED"/>
    <property type="match status" value="1"/>
</dbReference>
<dbReference type="Pfam" id="PF00002">
    <property type="entry name" value="7tm_2"/>
    <property type="match status" value="1"/>
</dbReference>
<dbReference type="Pfam" id="PF02793">
    <property type="entry name" value="HRM"/>
    <property type="match status" value="1"/>
</dbReference>
<dbReference type="PRINTS" id="PR01351">
    <property type="entry name" value="CGRPRECEPTOR"/>
</dbReference>
<dbReference type="PRINTS" id="PR01350">
    <property type="entry name" value="CTRFAMILY"/>
</dbReference>
<dbReference type="PRINTS" id="PR00249">
    <property type="entry name" value="GPCRSECRETIN"/>
</dbReference>
<dbReference type="SMART" id="SM00008">
    <property type="entry name" value="HormR"/>
    <property type="match status" value="1"/>
</dbReference>
<dbReference type="SUPFAM" id="SSF111418">
    <property type="entry name" value="Hormone receptor domain"/>
    <property type="match status" value="1"/>
</dbReference>
<dbReference type="PROSITE" id="PS00649">
    <property type="entry name" value="G_PROTEIN_RECEP_F2_1"/>
    <property type="match status" value="1"/>
</dbReference>
<dbReference type="PROSITE" id="PS00650">
    <property type="entry name" value="G_PROTEIN_RECEP_F2_2"/>
    <property type="match status" value="1"/>
</dbReference>
<dbReference type="PROSITE" id="PS50227">
    <property type="entry name" value="G_PROTEIN_RECEP_F2_3"/>
    <property type="match status" value="1"/>
</dbReference>
<dbReference type="PROSITE" id="PS50261">
    <property type="entry name" value="G_PROTEIN_RECEP_F2_4"/>
    <property type="match status" value="1"/>
</dbReference>
<gene>
    <name type="primary">CALCRL</name>
    <name type="synonym">CGRPR</name>
</gene>
<keyword id="KW-1003">Cell membrane</keyword>
<keyword id="KW-1015">Disulfide bond</keyword>
<keyword id="KW-0297">G-protein coupled receptor</keyword>
<keyword id="KW-0325">Glycoprotein</keyword>
<keyword id="KW-0472">Membrane</keyword>
<keyword id="KW-0597">Phosphoprotein</keyword>
<keyword id="KW-0675">Receptor</keyword>
<keyword id="KW-1185">Reference proteome</keyword>
<keyword id="KW-0732">Signal</keyword>
<keyword id="KW-0807">Transducer</keyword>
<keyword id="KW-0812">Transmembrane</keyword>
<keyword id="KW-1133">Transmembrane helix</keyword>
<feature type="signal peptide" evidence="1">
    <location>
        <begin position="1"/>
        <end position="22"/>
    </location>
</feature>
<feature type="chain" id="PRO_0000373831" description="Calcitonin gene-related peptide type 1 receptor">
    <location>
        <begin position="23"/>
        <end position="462"/>
    </location>
</feature>
<feature type="topological domain" description="Extracellular" evidence="5">
    <location>
        <begin position="23"/>
        <end position="140"/>
    </location>
</feature>
<feature type="transmembrane region" description="Helical; Name=1" evidence="2">
    <location>
        <begin position="141"/>
        <end position="165"/>
    </location>
</feature>
<feature type="topological domain" description="Cytoplasmic" evidence="5">
    <location>
        <begin position="166"/>
        <end position="176"/>
    </location>
</feature>
<feature type="transmembrane region" description="Helical; Name=2" evidence="2">
    <location>
        <begin position="177"/>
        <end position="199"/>
    </location>
</feature>
<feature type="topological domain" description="Extracellular" evidence="5">
    <location>
        <begin position="200"/>
        <end position="210"/>
    </location>
</feature>
<feature type="transmembrane region" description="Helical; Name=3" evidence="2">
    <location>
        <begin position="211"/>
        <end position="239"/>
    </location>
</feature>
<feature type="topological domain" description="Cytoplasmic" evidence="5">
    <location>
        <begin position="240"/>
        <end position="253"/>
    </location>
</feature>
<feature type="transmembrane region" description="Helical; Name=4" evidence="2">
    <location>
        <begin position="254"/>
        <end position="274"/>
    </location>
</feature>
<feature type="topological domain" description="Extracellular" evidence="5">
    <location>
        <begin position="275"/>
        <end position="290"/>
    </location>
</feature>
<feature type="transmembrane region" description="Helical; Name=5" evidence="2">
    <location>
        <begin position="291"/>
        <end position="315"/>
    </location>
</feature>
<feature type="topological domain" description="Cytoplasmic" evidence="5">
    <location>
        <begin position="316"/>
        <end position="330"/>
    </location>
</feature>
<feature type="transmembrane region" description="Helical; Name=6" evidence="2">
    <location>
        <begin position="331"/>
        <end position="352"/>
    </location>
</feature>
<feature type="topological domain" description="Extracellular" evidence="5">
    <location>
        <begin position="353"/>
        <end position="367"/>
    </location>
</feature>
<feature type="transmembrane region" description="Helical; Name=7" evidence="2">
    <location>
        <begin position="368"/>
        <end position="388"/>
    </location>
</feature>
<feature type="topological domain" description="Cytoplasmic" evidence="5">
    <location>
        <begin position="389"/>
        <end position="462"/>
    </location>
</feature>
<feature type="region of interest" description="Required for RAMP3 interaction" evidence="2">
    <location>
        <begin position="289"/>
        <end position="290"/>
    </location>
</feature>
<feature type="site" description="Required for ADM interaction" evidence="2">
    <location>
        <position position="203"/>
    </location>
</feature>
<feature type="site" description="Required for RAMP3 interaction" evidence="2">
    <location>
        <position position="251"/>
    </location>
</feature>
<feature type="site" description="Required for ADM2 interaction" evidence="2">
    <location>
        <position position="287"/>
    </location>
</feature>
<feature type="site" description="Required for RAMP2 interaction" evidence="2">
    <location>
        <position position="289"/>
    </location>
</feature>
<feature type="site" description="Required for ADM2 interaction" evidence="2">
    <location>
        <position position="296"/>
    </location>
</feature>
<feature type="site" description="Required for ADM2 interaction" evidence="2">
    <location>
        <position position="355"/>
    </location>
</feature>
<feature type="site" description="Required for ADM interaction" evidence="2">
    <location>
        <position position="374"/>
    </location>
</feature>
<feature type="modified residue" description="Phosphoserine" evidence="3">
    <location>
        <position position="421"/>
    </location>
</feature>
<feature type="modified residue" description="Phosphoserine" evidence="3">
    <location>
        <position position="446"/>
    </location>
</feature>
<feature type="glycosylation site" description="N-linked (GlcNAc...) asparagine" evidence="4">
    <location>
        <position position="67"/>
    </location>
</feature>
<feature type="glycosylation site" description="N-linked (GlcNAc...) asparagine" evidence="4">
    <location>
        <position position="119"/>
    </location>
</feature>
<feature type="glycosylation site" description="N-linked (GlcNAc...) asparagine" evidence="4">
    <location>
        <position position="124"/>
    </location>
</feature>
<feature type="disulfide bond" evidence="2">
    <location>
        <begin position="49"/>
        <end position="75"/>
    </location>
</feature>
<feature type="disulfide bond" evidence="2">
    <location>
        <begin position="66"/>
        <end position="106"/>
    </location>
</feature>
<feature type="disulfide bond" evidence="2">
    <location>
        <begin position="89"/>
        <end position="128"/>
    </location>
</feature>
<sequence length="462" mass="53387">MEKKFFLSFLFLLPFFMILVIAESEEENPDDLIQLGVTRNKIMTAQYECYQKIMQDPVQQTEGIYCNRTWDGWLCWNDVAAGTESMQHCPDYFQDFDPSEKVTKICDQDGNWFRHPASNRTWTNYTQCNVNTHEKVKTALNLFYLTIIGHVLSIASLLISLGIFFYFKSLSCQRITLHKNLFFSFVCNSVITIIHLTAVANNQALVATNPVSCKVSQFIHLYLMGCNYFWMLCEGIYLHTLVVVAVFAEKQHLMWYYFLGWGFPLIPACIHAVARRLYYNDNCWISSDTQLLYIIHGPICAALLVNLFFLLNIVRVLITKLKVTHQAESNLYMKAVRATLILVPLLGIEFVLIPWRPEGKIAEEIYDYIINILMHYQGLLVSTIFCFFNGEVQAILRRNWNQYKIQFGNNFSHSDTLRSASYTVSTISDGTGYSHDCLSEHLNGKSIHDTDNVVIKPEKLYD</sequence>
<organism>
    <name type="scientific">Bos taurus</name>
    <name type="common">Bovine</name>
    <dbReference type="NCBI Taxonomy" id="9913"/>
    <lineage>
        <taxon>Eukaryota</taxon>
        <taxon>Metazoa</taxon>
        <taxon>Chordata</taxon>
        <taxon>Craniata</taxon>
        <taxon>Vertebrata</taxon>
        <taxon>Euteleostomi</taxon>
        <taxon>Mammalia</taxon>
        <taxon>Eutheria</taxon>
        <taxon>Laurasiatheria</taxon>
        <taxon>Artiodactyla</taxon>
        <taxon>Ruminantia</taxon>
        <taxon>Pecora</taxon>
        <taxon>Bovidae</taxon>
        <taxon>Bovinae</taxon>
        <taxon>Bos</taxon>
    </lineage>
</organism>
<comment type="function">
    <text evidence="2">G protein-coupled receptor which specificity is determined by its interaction with receptor-activity-modifying proteins (RAMPs). Together with RAMP1, form the receptor complex for calcitonin-gene-related peptides CALCA/CGRP1 and CALCB/CGRP2. Together with RAMP2 or RAMP3, function as receptor complexes for adrenomedullin (ADM and ADM2). Ligand binding causes a conformation change that triggers signaling via guanine nucleotide-binding proteins (G proteins) and modulates the activity of downstream effectors. Activates cAMP-dependent pathway.</text>
</comment>
<comment type="subunit">
    <text evidence="2">Heterodimer of CALCRL and RAMP1; the receptor complex functions as CGRP receptor. Heterodimer of CALCRL and RAMP2 or CALCRL and RAMP3; the complexes function as adrenomedullin receptor.</text>
</comment>
<comment type="subcellular location">
    <subcellularLocation>
        <location evidence="2">Cell membrane</location>
        <topology evidence="2">Multi-pass membrane protein</topology>
    </subcellularLocation>
</comment>
<comment type="similarity">
    <text evidence="5">Belongs to the G-protein coupled receptor 2 family.</text>
</comment>
<comment type="sequence caution" evidence="5">
    <conflict type="erroneous initiation">
        <sequence resource="EMBL-CDS" id="AAI49185"/>
    </conflict>
</comment>
<reference key="1">
    <citation type="submission" date="2007-07" db="EMBL/GenBank/DDBJ databases">
        <authorList>
            <consortium name="NIH - Mammalian Gene Collection (MGC) project"/>
        </authorList>
    </citation>
    <scope>NUCLEOTIDE SEQUENCE [LARGE SCALE MRNA]</scope>
    <source>
        <strain>Hereford</strain>
        <tissue>Fetal skin</tissue>
    </source>
</reference>